<keyword id="KW-0054">Arabinose catabolism</keyword>
<keyword id="KW-0119">Carbohydrate metabolism</keyword>
<keyword id="KW-0294">Fucose metabolism</keyword>
<keyword id="KW-0456">Lyase</keyword>
<keyword id="KW-0479">Metal-binding</keyword>
<keyword id="KW-1185">Reference proteome</keyword>
<keyword id="KW-0862">Zinc</keyword>
<accession>Q8X6R8</accession>
<accession>Q7AB69</accession>
<sequence length="215" mass="23785">MERNKLARQIIDTCLEMTRLGLNQGTAGNVSVRYQDGMLITPTGIPYEKLTESHIVFIDGNGKHEEGKLPSSEWRFHMAAYQSRPDANAVVHNHAVHCTAVSILNRPIPAIHYMIAAAGGNSIPCAPYATFGTRELSEHVALALKNRKATLLQHHGLIACEVNLEKALWLAHEVEVLAQLYLTTLAITDPVPVLSDEEIAVVLEKFKTYGLRIEE</sequence>
<gene>
    <name evidence="1" type="primary">fucA</name>
    <name type="ordered locus">Z4117</name>
    <name type="ordered locus">ECs3660</name>
</gene>
<evidence type="ECO:0000255" key="1">
    <source>
        <dbReference type="HAMAP-Rule" id="MF_00987"/>
    </source>
</evidence>
<organism>
    <name type="scientific">Escherichia coli O157:H7</name>
    <dbReference type="NCBI Taxonomy" id="83334"/>
    <lineage>
        <taxon>Bacteria</taxon>
        <taxon>Pseudomonadati</taxon>
        <taxon>Pseudomonadota</taxon>
        <taxon>Gammaproteobacteria</taxon>
        <taxon>Enterobacterales</taxon>
        <taxon>Enterobacteriaceae</taxon>
        <taxon>Escherichia</taxon>
    </lineage>
</organism>
<reference key="1">
    <citation type="journal article" date="2001" name="Nature">
        <title>Genome sequence of enterohaemorrhagic Escherichia coli O157:H7.</title>
        <authorList>
            <person name="Perna N.T."/>
            <person name="Plunkett G. III"/>
            <person name="Burland V."/>
            <person name="Mau B."/>
            <person name="Glasner J.D."/>
            <person name="Rose D.J."/>
            <person name="Mayhew G.F."/>
            <person name="Evans P.S."/>
            <person name="Gregor J."/>
            <person name="Kirkpatrick H.A."/>
            <person name="Posfai G."/>
            <person name="Hackett J."/>
            <person name="Klink S."/>
            <person name="Boutin A."/>
            <person name="Shao Y."/>
            <person name="Miller L."/>
            <person name="Grotbeck E.J."/>
            <person name="Davis N.W."/>
            <person name="Lim A."/>
            <person name="Dimalanta E.T."/>
            <person name="Potamousis K."/>
            <person name="Apodaca J."/>
            <person name="Anantharaman T.S."/>
            <person name="Lin J."/>
            <person name="Yen G."/>
            <person name="Schwartz D.C."/>
            <person name="Welch R.A."/>
            <person name="Blattner F.R."/>
        </authorList>
    </citation>
    <scope>NUCLEOTIDE SEQUENCE [LARGE SCALE GENOMIC DNA]</scope>
    <source>
        <strain>O157:H7 / EDL933 / ATCC 700927 / EHEC</strain>
    </source>
</reference>
<reference key="2">
    <citation type="journal article" date="2001" name="DNA Res.">
        <title>Complete genome sequence of enterohemorrhagic Escherichia coli O157:H7 and genomic comparison with a laboratory strain K-12.</title>
        <authorList>
            <person name="Hayashi T."/>
            <person name="Makino K."/>
            <person name="Ohnishi M."/>
            <person name="Kurokawa K."/>
            <person name="Ishii K."/>
            <person name="Yokoyama K."/>
            <person name="Han C.-G."/>
            <person name="Ohtsubo E."/>
            <person name="Nakayama K."/>
            <person name="Murata T."/>
            <person name="Tanaka M."/>
            <person name="Tobe T."/>
            <person name="Iida T."/>
            <person name="Takami H."/>
            <person name="Honda T."/>
            <person name="Sasakawa C."/>
            <person name="Ogasawara N."/>
            <person name="Yasunaga T."/>
            <person name="Kuhara S."/>
            <person name="Shiba T."/>
            <person name="Hattori M."/>
            <person name="Shinagawa H."/>
        </authorList>
    </citation>
    <scope>NUCLEOTIDE SEQUENCE [LARGE SCALE GENOMIC DNA]</scope>
    <source>
        <strain>O157:H7 / Sakai / RIMD 0509952 / EHEC</strain>
    </source>
</reference>
<protein>
    <recommendedName>
        <fullName evidence="1">L-fuculose phosphate aldolase</fullName>
        <ecNumber evidence="1">4.1.2.17</ecNumber>
    </recommendedName>
    <alternativeName>
        <fullName evidence="1">L-fuculose-1-phosphate aldolase</fullName>
    </alternativeName>
</protein>
<comment type="function">
    <text evidence="1">Involved in the degradation of L-fucose and D-arabinose. Catalyzes the reversible cleavage of L-fuculose 1-phosphate (Fuc1P) to yield dihydroxyacetone phosphate (DHAP) and L-lactaldehyde.</text>
</comment>
<comment type="catalytic activity">
    <reaction evidence="1">
        <text>L-fuculose 1-phosphate = (S)-lactaldehyde + dihydroxyacetone phosphate</text>
        <dbReference type="Rhea" id="RHEA:12933"/>
        <dbReference type="ChEBI" id="CHEBI:18041"/>
        <dbReference type="ChEBI" id="CHEBI:57642"/>
        <dbReference type="ChEBI" id="CHEBI:57846"/>
        <dbReference type="EC" id="4.1.2.17"/>
    </reaction>
</comment>
<comment type="cofactor">
    <cofactor evidence="1">
        <name>Zn(2+)</name>
        <dbReference type="ChEBI" id="CHEBI:29105"/>
    </cofactor>
    <text evidence="1">Binds 1 zinc ion per subunit.</text>
</comment>
<comment type="pathway">
    <text evidence="1">Carbohydrate degradation; L-fucose degradation; L-lactaldehyde and glycerone phosphate from L-fucose: step 3/3.</text>
</comment>
<comment type="subunit">
    <text evidence="1">Homotetramer.</text>
</comment>
<comment type="similarity">
    <text evidence="1">Belongs to the aldolase class II family. AraD/FucA subfamily.</text>
</comment>
<proteinExistence type="inferred from homology"/>
<dbReference type="EC" id="4.1.2.17" evidence="1"/>
<dbReference type="EMBL" id="AE005174">
    <property type="protein sequence ID" value="AAG57914.1"/>
    <property type="molecule type" value="Genomic_DNA"/>
</dbReference>
<dbReference type="EMBL" id="BA000007">
    <property type="protein sequence ID" value="BAB37083.1"/>
    <property type="molecule type" value="Genomic_DNA"/>
</dbReference>
<dbReference type="PIR" id="D91086">
    <property type="entry name" value="D91086"/>
</dbReference>
<dbReference type="PIR" id="F85931">
    <property type="entry name" value="F85931"/>
</dbReference>
<dbReference type="RefSeq" id="NP_311687.1">
    <property type="nucleotide sequence ID" value="NC_002695.1"/>
</dbReference>
<dbReference type="RefSeq" id="WP_000440775.1">
    <property type="nucleotide sequence ID" value="NZ_VOAI01000003.1"/>
</dbReference>
<dbReference type="SMR" id="Q8X6R8"/>
<dbReference type="STRING" id="155864.Z4117"/>
<dbReference type="GeneID" id="75203809"/>
<dbReference type="GeneID" id="916460"/>
<dbReference type="KEGG" id="ece:Z4117"/>
<dbReference type="KEGG" id="ecs:ECs_3660"/>
<dbReference type="PATRIC" id="fig|386585.9.peg.3826"/>
<dbReference type="eggNOG" id="COG0235">
    <property type="taxonomic scope" value="Bacteria"/>
</dbReference>
<dbReference type="HOGENOM" id="CLU_006033_3_0_6"/>
<dbReference type="OMA" id="YATFGTH"/>
<dbReference type="UniPathway" id="UPA00563">
    <property type="reaction ID" value="UER00626"/>
</dbReference>
<dbReference type="Proteomes" id="UP000000558">
    <property type="component" value="Chromosome"/>
</dbReference>
<dbReference type="Proteomes" id="UP000002519">
    <property type="component" value="Chromosome"/>
</dbReference>
<dbReference type="GO" id="GO:0005829">
    <property type="term" value="C:cytosol"/>
    <property type="evidence" value="ECO:0007669"/>
    <property type="project" value="TreeGrafter"/>
</dbReference>
<dbReference type="GO" id="GO:0008738">
    <property type="term" value="F:L-fuculose-phosphate aldolase activity"/>
    <property type="evidence" value="ECO:0007669"/>
    <property type="project" value="UniProtKB-UniRule"/>
</dbReference>
<dbReference type="GO" id="GO:0008270">
    <property type="term" value="F:zinc ion binding"/>
    <property type="evidence" value="ECO:0007669"/>
    <property type="project" value="UniProtKB-UniRule"/>
</dbReference>
<dbReference type="GO" id="GO:0019568">
    <property type="term" value="P:arabinose catabolic process"/>
    <property type="evidence" value="ECO:0007669"/>
    <property type="project" value="UniProtKB-KW"/>
</dbReference>
<dbReference type="GO" id="GO:0042355">
    <property type="term" value="P:L-fucose catabolic process"/>
    <property type="evidence" value="ECO:0007669"/>
    <property type="project" value="UniProtKB-UniRule"/>
</dbReference>
<dbReference type="CDD" id="cd00398">
    <property type="entry name" value="Aldolase_II"/>
    <property type="match status" value="1"/>
</dbReference>
<dbReference type="FunFam" id="3.40.225.10:FF:000005">
    <property type="entry name" value="L-fuculose phosphate aldolase"/>
    <property type="match status" value="1"/>
</dbReference>
<dbReference type="Gene3D" id="3.40.225.10">
    <property type="entry name" value="Class II aldolase/adducin N-terminal domain"/>
    <property type="match status" value="1"/>
</dbReference>
<dbReference type="HAMAP" id="MF_00987">
    <property type="entry name" value="FucA"/>
    <property type="match status" value="1"/>
</dbReference>
<dbReference type="InterPro" id="IPR050197">
    <property type="entry name" value="Aldolase_class_II_sugar_metab"/>
</dbReference>
<dbReference type="InterPro" id="IPR001303">
    <property type="entry name" value="Aldolase_II/adducin_N"/>
</dbReference>
<dbReference type="InterPro" id="IPR036409">
    <property type="entry name" value="Aldolase_II/adducin_N_sf"/>
</dbReference>
<dbReference type="InterPro" id="IPR004782">
    <property type="entry name" value="FucA"/>
</dbReference>
<dbReference type="NCBIfam" id="TIGR01086">
    <property type="entry name" value="fucA"/>
    <property type="match status" value="1"/>
</dbReference>
<dbReference type="NCBIfam" id="NF005984">
    <property type="entry name" value="PRK08087.1"/>
    <property type="match status" value="1"/>
</dbReference>
<dbReference type="PANTHER" id="PTHR22789:SF0">
    <property type="entry name" value="3-OXO-TETRONATE 4-PHOSPHATE DECARBOXYLASE-RELATED"/>
    <property type="match status" value="1"/>
</dbReference>
<dbReference type="PANTHER" id="PTHR22789">
    <property type="entry name" value="FUCULOSE PHOSPHATE ALDOLASE"/>
    <property type="match status" value="1"/>
</dbReference>
<dbReference type="Pfam" id="PF00596">
    <property type="entry name" value="Aldolase_II"/>
    <property type="match status" value="1"/>
</dbReference>
<dbReference type="SMART" id="SM01007">
    <property type="entry name" value="Aldolase_II"/>
    <property type="match status" value="1"/>
</dbReference>
<dbReference type="SUPFAM" id="SSF53639">
    <property type="entry name" value="AraD/HMP-PK domain-like"/>
    <property type="match status" value="1"/>
</dbReference>
<name>FUCA_ECO57</name>
<feature type="chain" id="PRO_0000162926" description="L-fuculose phosphate aldolase">
    <location>
        <begin position="1"/>
        <end position="215"/>
    </location>
</feature>
<feature type="active site" description="Proton donor/acceptor" evidence="1">
    <location>
        <position position="73"/>
    </location>
</feature>
<feature type="binding site" evidence="1">
    <location>
        <begin position="28"/>
        <end position="29"/>
    </location>
    <ligand>
        <name>substrate</name>
    </ligand>
</feature>
<feature type="binding site" evidence="1">
    <location>
        <begin position="43"/>
        <end position="44"/>
    </location>
    <ligand>
        <name>substrate</name>
    </ligand>
</feature>
<feature type="binding site" evidence="1">
    <location>
        <begin position="71"/>
        <end position="72"/>
    </location>
    <ligand>
        <name>substrate</name>
    </ligand>
</feature>
<feature type="binding site" evidence="1">
    <location>
        <position position="73"/>
    </location>
    <ligand>
        <name>Zn(2+)</name>
        <dbReference type="ChEBI" id="CHEBI:29105"/>
        <note>catalytic</note>
    </ligand>
</feature>
<feature type="binding site" evidence="1">
    <location>
        <position position="92"/>
    </location>
    <ligand>
        <name>Zn(2+)</name>
        <dbReference type="ChEBI" id="CHEBI:29105"/>
        <note>catalytic</note>
    </ligand>
</feature>
<feature type="binding site" evidence="1">
    <location>
        <position position="94"/>
    </location>
    <ligand>
        <name>Zn(2+)</name>
        <dbReference type="ChEBI" id="CHEBI:29105"/>
        <note>catalytic</note>
    </ligand>
</feature>
<feature type="binding site" evidence="1">
    <location>
        <position position="155"/>
    </location>
    <ligand>
        <name>Zn(2+)</name>
        <dbReference type="ChEBI" id="CHEBI:29105"/>
        <note>catalytic</note>
    </ligand>
</feature>
<feature type="site" description="Plays a key role in the stabilization of the transition state and positioning the aldehyde component" evidence="1">
    <location>
        <position position="113"/>
    </location>
</feature>
<feature type="site" description="Plays a key role in the stabilization of the transition state and positioning the aldehyde component" evidence="1">
    <location>
        <position position="131"/>
    </location>
</feature>
<feature type="site" description="Plays a key role in the stabilization of the transition state and positioning the aldehyde component" evidence="1">
    <location>
        <position position="209"/>
    </location>
</feature>